<comment type="function">
    <text evidence="1">DNA-dependent RNA polymerase catalyzes the transcription of DNA into RNA using the four ribonucleoside triphosphates as substrates.</text>
</comment>
<comment type="catalytic activity">
    <reaction evidence="1">
        <text>RNA(n) + a ribonucleoside 5'-triphosphate = RNA(n+1) + diphosphate</text>
        <dbReference type="Rhea" id="RHEA:21248"/>
        <dbReference type="Rhea" id="RHEA-COMP:14527"/>
        <dbReference type="Rhea" id="RHEA-COMP:17342"/>
        <dbReference type="ChEBI" id="CHEBI:33019"/>
        <dbReference type="ChEBI" id="CHEBI:61557"/>
        <dbReference type="ChEBI" id="CHEBI:140395"/>
        <dbReference type="EC" id="2.7.7.6"/>
    </reaction>
</comment>
<comment type="cofactor">
    <cofactor evidence="1">
        <name>Mg(2+)</name>
        <dbReference type="ChEBI" id="CHEBI:18420"/>
    </cofactor>
    <text evidence="1">Binds 1 Mg(2+) ion per subunit.</text>
</comment>
<comment type="cofactor">
    <cofactor evidence="1">
        <name>Zn(2+)</name>
        <dbReference type="ChEBI" id="CHEBI:29105"/>
    </cofactor>
    <text evidence="1">Binds 2 Zn(2+) ions per subunit.</text>
</comment>
<comment type="subunit">
    <text evidence="1">The RNAP catalytic core consists of 2 alpha, 1 beta, 1 beta' and 1 omega subunit. When a sigma factor is associated with the core the holoenzyme is formed, which can initiate transcription.</text>
</comment>
<comment type="similarity">
    <text evidence="1">Belongs to the RNA polymerase beta' chain family.</text>
</comment>
<sequence>MLDVNFFDELRIGLATAEDIRQWSYGEVKKPETINYRTLKPEKDGLFCEKIFGPTRDWECYCGKYKRVRFKGIICERCGVEVTRAKVRRERMGHIELAAPVTHIWYFKGVPSRLGYLLDLAPKDLEKIIYFAAYVITSVDEEMRHNELSTLEAEMAVERKAVEDQRDGELEARAQKLEADLAELEAEGAKADARRKVRDGGEREMRQIRDRAQRELDRLEDIWSTFTKLAPKQLIVDENLYRELVDRYGEYFTGAMGAESIQKLIENFDIDAEAESLRDVIRNGKGQKKLRALKRLKVVAAFQQSGNSPMGMVLDAVPVIPPELRPMVQLDGGRFATSDLNDLYRRVINRNNRLKRLIDLGAPEIIVNNEKRMLQESVDALFDNGRRGRPVTGPGNRPLKSLSDLLKGKQGRFRQNLLGKRVDYSGRSVIVVGPQLKLHQCGLPKLMALELFKPFVMKRLVDLNHAQNIKSAKRMVERQRPQVWDVLEEVIAEHPVLLNRAPTLHRLGIQAFEPMLVEGKAIQLHPLVCEAFNADFDGDQMAVHLPLSAEAQAEARILMLSSNNILSPASGRPLAMPRLDMVTGLYYLTTEVPEDTGEYQPASGDHPETGVYSSPAEAIMAADRGVLSVRAKIKVRLTQLRPPVEIEAELFGHSGWQPGDAWMAETTLGRVMFNELLPLGYPFVNKQMHKKVQAAIINDLAERYPMIVVAQTVDKLKDAGFYWATRSGVTVSMADVLVPPRKKEILDHYEERADKVEKQFQRGALNHDERNEALVEIWKEATDEVGQALREHYPDDNPIITIVDSGATGNFTQTRTLAGMKGLVTNPKGEFIPRPVKSSFREGLTVLEYFINTHGARKGLADTALRTADSGYLTRRLVDVSQDVIVREHDCQTERGIVVELAERAPDGTLIRDPYIETSAYARTLGTDAVDEAGNVIVERGQDLGDPEIDALLAAGITQVKVRSVLTCATSTGVCATCYGRSMATGKLVDIGEAVGIVAAQSIGEPGTQLTMRTFHQGGVGEDITGGLPRVQELFEARVPRGKAPIADVTGRVRLEDGERFYKITIVPDDGGEEVVYDKISKRQRLRVFKHEDGSERVLSDGDHVEVGQQLMEGSADPHEVLRVQGPREVQIHLVREVQEVYRAQGVSIHDKHIEVIVRQMLRRVTIIDSGSTEFLPGSLIDRAEFEAENRRVVAEGGEPAAGRPVLMGITKASLATDSWLSAASFQETTRVLTDAAINCRSDKLNGLKENVIIGKLIPAGTGINRYRNIAVQPTEEARAAAYTIPSYEDQYYSPDFGAATGAAVPLDDYGYSDYR</sequence>
<accession>P9WGY6</accession>
<accession>L0T4I2</accession>
<accession>O06771</accession>
<accession>P0A674</accession>
<accession>P47769</accession>
<gene>
    <name evidence="1" type="primary">rpoC</name>
    <name type="ordered locus">MT0696</name>
</gene>
<reference key="1">
    <citation type="journal article" date="2002" name="J. Bacteriol.">
        <title>Whole-genome comparison of Mycobacterium tuberculosis clinical and laboratory strains.</title>
        <authorList>
            <person name="Fleischmann R.D."/>
            <person name="Alland D."/>
            <person name="Eisen J.A."/>
            <person name="Carpenter L."/>
            <person name="White O."/>
            <person name="Peterson J.D."/>
            <person name="DeBoy R.T."/>
            <person name="Dodson R.J."/>
            <person name="Gwinn M.L."/>
            <person name="Haft D.H."/>
            <person name="Hickey E.K."/>
            <person name="Kolonay J.F."/>
            <person name="Nelson W.C."/>
            <person name="Umayam L.A."/>
            <person name="Ermolaeva M.D."/>
            <person name="Salzberg S.L."/>
            <person name="Delcher A."/>
            <person name="Utterback T.R."/>
            <person name="Weidman J.F."/>
            <person name="Khouri H.M."/>
            <person name="Gill J."/>
            <person name="Mikula A."/>
            <person name="Bishai W."/>
            <person name="Jacobs W.R. Jr."/>
            <person name="Venter J.C."/>
            <person name="Fraser C.M."/>
        </authorList>
    </citation>
    <scope>NUCLEOTIDE SEQUENCE [LARGE SCALE GENOMIC DNA]</scope>
    <source>
        <strain>CDC 1551 / Oshkosh</strain>
    </source>
</reference>
<keyword id="KW-0240">DNA-directed RNA polymerase</keyword>
<keyword id="KW-0460">Magnesium</keyword>
<keyword id="KW-0479">Metal-binding</keyword>
<keyword id="KW-0548">Nucleotidyltransferase</keyword>
<keyword id="KW-1185">Reference proteome</keyword>
<keyword id="KW-0804">Transcription</keyword>
<keyword id="KW-0808">Transferase</keyword>
<keyword id="KW-0862">Zinc</keyword>
<name>RPOC_MYCTO</name>
<organism>
    <name type="scientific">Mycobacterium tuberculosis (strain CDC 1551 / Oshkosh)</name>
    <dbReference type="NCBI Taxonomy" id="83331"/>
    <lineage>
        <taxon>Bacteria</taxon>
        <taxon>Bacillati</taxon>
        <taxon>Actinomycetota</taxon>
        <taxon>Actinomycetes</taxon>
        <taxon>Mycobacteriales</taxon>
        <taxon>Mycobacteriaceae</taxon>
        <taxon>Mycobacterium</taxon>
        <taxon>Mycobacterium tuberculosis complex</taxon>
    </lineage>
</organism>
<dbReference type="EC" id="2.7.7.6" evidence="1"/>
<dbReference type="EMBL" id="AE000516">
    <property type="protein sequence ID" value="AAK44922.1"/>
    <property type="molecule type" value="Genomic_DNA"/>
</dbReference>
<dbReference type="PIR" id="G70535">
    <property type="entry name" value="G70535"/>
</dbReference>
<dbReference type="RefSeq" id="WP_003917327.1">
    <property type="nucleotide sequence ID" value="NZ_KK341227.1"/>
</dbReference>
<dbReference type="SMR" id="P9WGY6"/>
<dbReference type="KEGG" id="mtc:MT0696"/>
<dbReference type="PATRIC" id="fig|83331.31.peg.740"/>
<dbReference type="HOGENOM" id="CLU_000524_3_1_11"/>
<dbReference type="Proteomes" id="UP000001020">
    <property type="component" value="Chromosome"/>
</dbReference>
<dbReference type="GO" id="GO:0000428">
    <property type="term" value="C:DNA-directed RNA polymerase complex"/>
    <property type="evidence" value="ECO:0007669"/>
    <property type="project" value="UniProtKB-KW"/>
</dbReference>
<dbReference type="GO" id="GO:0003677">
    <property type="term" value="F:DNA binding"/>
    <property type="evidence" value="ECO:0007669"/>
    <property type="project" value="UniProtKB-UniRule"/>
</dbReference>
<dbReference type="GO" id="GO:0003899">
    <property type="term" value="F:DNA-directed RNA polymerase activity"/>
    <property type="evidence" value="ECO:0007669"/>
    <property type="project" value="UniProtKB-UniRule"/>
</dbReference>
<dbReference type="GO" id="GO:0000287">
    <property type="term" value="F:magnesium ion binding"/>
    <property type="evidence" value="ECO:0007669"/>
    <property type="project" value="UniProtKB-UniRule"/>
</dbReference>
<dbReference type="GO" id="GO:0008270">
    <property type="term" value="F:zinc ion binding"/>
    <property type="evidence" value="ECO:0007669"/>
    <property type="project" value="UniProtKB-UniRule"/>
</dbReference>
<dbReference type="GO" id="GO:0006351">
    <property type="term" value="P:DNA-templated transcription"/>
    <property type="evidence" value="ECO:0007669"/>
    <property type="project" value="UniProtKB-UniRule"/>
</dbReference>
<dbReference type="CDD" id="cd02655">
    <property type="entry name" value="RNAP_beta'_C"/>
    <property type="match status" value="1"/>
</dbReference>
<dbReference type="CDD" id="cd01609">
    <property type="entry name" value="RNAP_beta'_N"/>
    <property type="match status" value="1"/>
</dbReference>
<dbReference type="FunFam" id="1.10.132.30:FF:000003">
    <property type="entry name" value="DNA-directed RNA polymerase subunit beta"/>
    <property type="match status" value="1"/>
</dbReference>
<dbReference type="FunFam" id="1.10.150.390:FF:000002">
    <property type="entry name" value="DNA-directed RNA polymerase subunit beta"/>
    <property type="match status" value="1"/>
</dbReference>
<dbReference type="FunFam" id="1.10.274.100:FF:000009">
    <property type="entry name" value="DNA-directed RNA polymerase subunit beta"/>
    <property type="match status" value="1"/>
</dbReference>
<dbReference type="FunFam" id="1.10.40.90:FF:000001">
    <property type="entry name" value="DNA-directed RNA polymerase subunit beta"/>
    <property type="match status" value="1"/>
</dbReference>
<dbReference type="FunFam" id="4.10.860.120:FF:000001">
    <property type="entry name" value="DNA-directed RNA polymerase subunit beta"/>
    <property type="match status" value="1"/>
</dbReference>
<dbReference type="Gene3D" id="1.10.132.30">
    <property type="match status" value="1"/>
</dbReference>
<dbReference type="Gene3D" id="1.10.150.390">
    <property type="match status" value="1"/>
</dbReference>
<dbReference type="Gene3D" id="1.10.1790.20">
    <property type="match status" value="1"/>
</dbReference>
<dbReference type="Gene3D" id="1.10.40.90">
    <property type="match status" value="1"/>
</dbReference>
<dbReference type="Gene3D" id="2.40.40.20">
    <property type="match status" value="1"/>
</dbReference>
<dbReference type="Gene3D" id="2.40.50.100">
    <property type="match status" value="1"/>
</dbReference>
<dbReference type="Gene3D" id="4.10.860.120">
    <property type="entry name" value="RNA polymerase II, clamp domain"/>
    <property type="match status" value="1"/>
</dbReference>
<dbReference type="Gene3D" id="1.10.274.100">
    <property type="entry name" value="RNA polymerase Rpb1, domain 3"/>
    <property type="match status" value="1"/>
</dbReference>
<dbReference type="HAMAP" id="MF_01322">
    <property type="entry name" value="RNApol_bact_RpoC"/>
    <property type="match status" value="1"/>
</dbReference>
<dbReference type="InterPro" id="IPR045867">
    <property type="entry name" value="DNA-dir_RpoC_beta_prime"/>
</dbReference>
<dbReference type="InterPro" id="IPR012754">
    <property type="entry name" value="DNA-dir_RpoC_beta_prime_bact"/>
</dbReference>
<dbReference type="InterPro" id="IPR000722">
    <property type="entry name" value="RNA_pol_asu"/>
</dbReference>
<dbReference type="InterPro" id="IPR006592">
    <property type="entry name" value="RNA_pol_N"/>
</dbReference>
<dbReference type="InterPro" id="IPR007080">
    <property type="entry name" value="RNA_pol_Rpb1_1"/>
</dbReference>
<dbReference type="InterPro" id="IPR007066">
    <property type="entry name" value="RNA_pol_Rpb1_3"/>
</dbReference>
<dbReference type="InterPro" id="IPR042102">
    <property type="entry name" value="RNA_pol_Rpb1_3_sf"/>
</dbReference>
<dbReference type="InterPro" id="IPR007083">
    <property type="entry name" value="RNA_pol_Rpb1_4"/>
</dbReference>
<dbReference type="InterPro" id="IPR007081">
    <property type="entry name" value="RNA_pol_Rpb1_5"/>
</dbReference>
<dbReference type="InterPro" id="IPR044893">
    <property type="entry name" value="RNA_pol_Rpb1_clamp_domain"/>
</dbReference>
<dbReference type="InterPro" id="IPR038120">
    <property type="entry name" value="Rpb1_funnel_sf"/>
</dbReference>
<dbReference type="NCBIfam" id="NF011498">
    <property type="entry name" value="PRK14906.1"/>
    <property type="match status" value="1"/>
</dbReference>
<dbReference type="NCBIfam" id="TIGR02386">
    <property type="entry name" value="rpoC_TIGR"/>
    <property type="match status" value="1"/>
</dbReference>
<dbReference type="PANTHER" id="PTHR19376">
    <property type="entry name" value="DNA-DIRECTED RNA POLYMERASE"/>
    <property type="match status" value="1"/>
</dbReference>
<dbReference type="PANTHER" id="PTHR19376:SF54">
    <property type="entry name" value="DNA-DIRECTED RNA POLYMERASE SUBUNIT BETA"/>
    <property type="match status" value="1"/>
</dbReference>
<dbReference type="Pfam" id="PF04997">
    <property type="entry name" value="RNA_pol_Rpb1_1"/>
    <property type="match status" value="1"/>
</dbReference>
<dbReference type="Pfam" id="PF00623">
    <property type="entry name" value="RNA_pol_Rpb1_2"/>
    <property type="match status" value="1"/>
</dbReference>
<dbReference type="Pfam" id="PF04983">
    <property type="entry name" value="RNA_pol_Rpb1_3"/>
    <property type="match status" value="1"/>
</dbReference>
<dbReference type="Pfam" id="PF05000">
    <property type="entry name" value="RNA_pol_Rpb1_4"/>
    <property type="match status" value="1"/>
</dbReference>
<dbReference type="Pfam" id="PF04998">
    <property type="entry name" value="RNA_pol_Rpb1_5"/>
    <property type="match status" value="1"/>
</dbReference>
<dbReference type="SMART" id="SM00663">
    <property type="entry name" value="RPOLA_N"/>
    <property type="match status" value="1"/>
</dbReference>
<dbReference type="SUPFAM" id="SSF64484">
    <property type="entry name" value="beta and beta-prime subunits of DNA dependent RNA-polymerase"/>
    <property type="match status" value="1"/>
</dbReference>
<evidence type="ECO:0000255" key="1">
    <source>
        <dbReference type="HAMAP-Rule" id="MF_01322"/>
    </source>
</evidence>
<feature type="chain" id="PRO_0000428280" description="DNA-directed RNA polymerase subunit beta'">
    <location>
        <begin position="1"/>
        <end position="1316"/>
    </location>
</feature>
<feature type="binding site" evidence="1">
    <location>
        <position position="60"/>
    </location>
    <ligand>
        <name>Zn(2+)</name>
        <dbReference type="ChEBI" id="CHEBI:29105"/>
        <label>1</label>
    </ligand>
</feature>
<feature type="binding site" evidence="1">
    <location>
        <position position="62"/>
    </location>
    <ligand>
        <name>Zn(2+)</name>
        <dbReference type="ChEBI" id="CHEBI:29105"/>
        <label>1</label>
    </ligand>
</feature>
<feature type="binding site" evidence="1">
    <location>
        <position position="75"/>
    </location>
    <ligand>
        <name>Zn(2+)</name>
        <dbReference type="ChEBI" id="CHEBI:29105"/>
        <label>1</label>
    </ligand>
</feature>
<feature type="binding site" evidence="1">
    <location>
        <position position="78"/>
    </location>
    <ligand>
        <name>Zn(2+)</name>
        <dbReference type="ChEBI" id="CHEBI:29105"/>
        <label>1</label>
    </ligand>
</feature>
<feature type="binding site" evidence="1">
    <location>
        <position position="535"/>
    </location>
    <ligand>
        <name>Mg(2+)</name>
        <dbReference type="ChEBI" id="CHEBI:18420"/>
    </ligand>
</feature>
<feature type="binding site" evidence="1">
    <location>
        <position position="537"/>
    </location>
    <ligand>
        <name>Mg(2+)</name>
        <dbReference type="ChEBI" id="CHEBI:18420"/>
    </ligand>
</feature>
<feature type="binding site" evidence="1">
    <location>
        <position position="539"/>
    </location>
    <ligand>
        <name>Mg(2+)</name>
        <dbReference type="ChEBI" id="CHEBI:18420"/>
    </ligand>
</feature>
<feature type="binding site" evidence="1">
    <location>
        <position position="891"/>
    </location>
    <ligand>
        <name>Zn(2+)</name>
        <dbReference type="ChEBI" id="CHEBI:29105"/>
        <label>2</label>
    </ligand>
</feature>
<feature type="binding site" evidence="1">
    <location>
        <position position="968"/>
    </location>
    <ligand>
        <name>Zn(2+)</name>
        <dbReference type="ChEBI" id="CHEBI:29105"/>
        <label>2</label>
    </ligand>
</feature>
<feature type="binding site" evidence="1">
    <location>
        <position position="975"/>
    </location>
    <ligand>
        <name>Zn(2+)</name>
        <dbReference type="ChEBI" id="CHEBI:29105"/>
        <label>2</label>
    </ligand>
</feature>
<feature type="binding site" evidence="1">
    <location>
        <position position="978"/>
    </location>
    <ligand>
        <name>Zn(2+)</name>
        <dbReference type="ChEBI" id="CHEBI:29105"/>
        <label>2</label>
    </ligand>
</feature>
<proteinExistence type="inferred from homology"/>
<protein>
    <recommendedName>
        <fullName evidence="1">DNA-directed RNA polymerase subunit beta'</fullName>
        <shortName evidence="1">RNAP subunit beta'</shortName>
        <ecNumber evidence="1">2.7.7.6</ecNumber>
    </recommendedName>
    <alternativeName>
        <fullName evidence="1">RNA polymerase subunit beta'</fullName>
    </alternativeName>
    <alternativeName>
        <fullName evidence="1">Transcriptase subunit beta'</fullName>
    </alternativeName>
</protein>